<organism>
    <name type="scientific">Saccharolobus islandicus (strain M.16.4 / Kamchatka #3)</name>
    <name type="common">Sulfolobus islandicus</name>
    <dbReference type="NCBI Taxonomy" id="426118"/>
    <lineage>
        <taxon>Archaea</taxon>
        <taxon>Thermoproteota</taxon>
        <taxon>Thermoprotei</taxon>
        <taxon>Sulfolobales</taxon>
        <taxon>Sulfolobaceae</taxon>
        <taxon>Saccharolobus</taxon>
    </lineage>
</organism>
<feature type="chain" id="PRO_1000215340" description="Replication factor C large subunit">
    <location>
        <begin position="1"/>
        <end position="405"/>
    </location>
</feature>
<feature type="binding site" evidence="1">
    <location>
        <begin position="47"/>
        <end position="54"/>
    </location>
    <ligand>
        <name>ATP</name>
        <dbReference type="ChEBI" id="CHEBI:30616"/>
    </ligand>
</feature>
<accession>C4KHA7</accession>
<protein>
    <recommendedName>
        <fullName evidence="1">Replication factor C large subunit</fullName>
        <shortName evidence="1">RFC large subunit</shortName>
    </recommendedName>
    <alternativeName>
        <fullName evidence="1">Clamp loader large subunit</fullName>
    </alternativeName>
</protein>
<name>RFCL_SACI6</name>
<dbReference type="EMBL" id="CP001402">
    <property type="protein sequence ID" value="ACR41971.1"/>
    <property type="molecule type" value="Genomic_DNA"/>
</dbReference>
<dbReference type="RefSeq" id="WP_012735948.1">
    <property type="nucleotide sequence ID" value="NC_012726.1"/>
</dbReference>
<dbReference type="SMR" id="C4KHA7"/>
<dbReference type="GeneID" id="84052977"/>
<dbReference type="KEGG" id="sid:M164_1365"/>
<dbReference type="HOGENOM" id="CLU_027255_1_1_2"/>
<dbReference type="Proteomes" id="UP000001479">
    <property type="component" value="Chromosome"/>
</dbReference>
<dbReference type="GO" id="GO:0005524">
    <property type="term" value="F:ATP binding"/>
    <property type="evidence" value="ECO:0007669"/>
    <property type="project" value="UniProtKB-UniRule"/>
</dbReference>
<dbReference type="GO" id="GO:0016887">
    <property type="term" value="F:ATP hydrolysis activity"/>
    <property type="evidence" value="ECO:0007669"/>
    <property type="project" value="InterPro"/>
</dbReference>
<dbReference type="GO" id="GO:0003689">
    <property type="term" value="F:DNA clamp loader activity"/>
    <property type="evidence" value="ECO:0007669"/>
    <property type="project" value="UniProtKB-UniRule"/>
</dbReference>
<dbReference type="GO" id="GO:0006260">
    <property type="term" value="P:DNA replication"/>
    <property type="evidence" value="ECO:0007669"/>
    <property type="project" value="UniProtKB-UniRule"/>
</dbReference>
<dbReference type="CDD" id="cd00009">
    <property type="entry name" value="AAA"/>
    <property type="match status" value="1"/>
</dbReference>
<dbReference type="CDD" id="cd18140">
    <property type="entry name" value="HLD_clamp_RFC"/>
    <property type="match status" value="1"/>
</dbReference>
<dbReference type="Gene3D" id="1.10.8.60">
    <property type="match status" value="1"/>
</dbReference>
<dbReference type="Gene3D" id="3.40.50.300">
    <property type="entry name" value="P-loop containing nucleotide triphosphate hydrolases"/>
    <property type="match status" value="1"/>
</dbReference>
<dbReference type="HAMAP" id="MF_01508">
    <property type="entry name" value="RfcL"/>
    <property type="match status" value="1"/>
</dbReference>
<dbReference type="InterPro" id="IPR003593">
    <property type="entry name" value="AAA+_ATPase"/>
</dbReference>
<dbReference type="InterPro" id="IPR003959">
    <property type="entry name" value="ATPase_AAA_core"/>
</dbReference>
<dbReference type="InterPro" id="IPR027417">
    <property type="entry name" value="P-loop_NTPase"/>
</dbReference>
<dbReference type="InterPro" id="IPR023935">
    <property type="entry name" value="Rep_factor-C_lsu"/>
</dbReference>
<dbReference type="InterPro" id="IPR047854">
    <property type="entry name" value="RFC_lid"/>
</dbReference>
<dbReference type="NCBIfam" id="NF003226">
    <property type="entry name" value="PRK04195.1-1"/>
    <property type="match status" value="1"/>
</dbReference>
<dbReference type="NCBIfam" id="NF003229">
    <property type="entry name" value="PRK04195.1-5"/>
    <property type="match status" value="1"/>
</dbReference>
<dbReference type="PANTHER" id="PTHR23389">
    <property type="entry name" value="CHROMOSOME TRANSMISSION FIDELITY FACTOR 18"/>
    <property type="match status" value="1"/>
</dbReference>
<dbReference type="PANTHER" id="PTHR23389:SF6">
    <property type="entry name" value="REPLICATION FACTOR C SUBUNIT 1"/>
    <property type="match status" value="1"/>
</dbReference>
<dbReference type="Pfam" id="PF00004">
    <property type="entry name" value="AAA"/>
    <property type="match status" value="1"/>
</dbReference>
<dbReference type="Pfam" id="PF21960">
    <property type="entry name" value="RCF1-5-like_lid"/>
    <property type="match status" value="1"/>
</dbReference>
<dbReference type="SMART" id="SM00382">
    <property type="entry name" value="AAA"/>
    <property type="match status" value="1"/>
</dbReference>
<dbReference type="SUPFAM" id="SSF52540">
    <property type="entry name" value="P-loop containing nucleoside triphosphate hydrolases"/>
    <property type="match status" value="1"/>
</dbReference>
<gene>
    <name evidence="1" type="primary">rfcL</name>
    <name type="ordered locus">M164_1365</name>
</gene>
<proteinExistence type="inferred from homology"/>
<comment type="function">
    <text evidence="1">Part of the RFC clamp loader complex which loads the PCNA sliding clamp onto DNA.</text>
</comment>
<comment type="subunit">
    <text evidence="1">Heteromultimer composed of small subunits (RfcS) and large subunits (RfcL).</text>
</comment>
<comment type="similarity">
    <text evidence="1">Belongs to the activator 1 small subunits family. RfcL subfamily.</text>
</comment>
<reference key="1">
    <citation type="journal article" date="2009" name="Proc. Natl. Acad. Sci. U.S.A.">
        <title>Biogeography of the Sulfolobus islandicus pan-genome.</title>
        <authorList>
            <person name="Reno M.L."/>
            <person name="Held N.L."/>
            <person name="Fields C.J."/>
            <person name="Burke P.V."/>
            <person name="Whitaker R.J."/>
        </authorList>
    </citation>
    <scope>NUCLEOTIDE SEQUENCE [LARGE SCALE GENOMIC DNA]</scope>
    <source>
        <strain>M.16.4 / Kamchatka #3</strain>
    </source>
</reference>
<keyword id="KW-0067">ATP-binding</keyword>
<keyword id="KW-0235">DNA replication</keyword>
<keyword id="KW-0547">Nucleotide-binding</keyword>
<sequence length="405" mass="46657">MIQWFLKYRPRSLKDVENQDGAKKELQEWIESWLNGKPNAKAVLLHGPPGVGKTTLAEALAHDYNLELLEMNASDSRKLQDIKSVAEKASVYGSIFGTRGKLILLDEVDGINVREDTGAIQGILELIEKTKYPIIMTANDPWNPALRELRNKTKMVGLNKLGKYPLRRLLKKICQAEKIICDDEALNYIIDTSEGDARYAINMLQGIGEGYGKVTLDLVEAMARRKERELDPFETLRDIFWARYAWQAKNAATSAQIDYDMLIRWISENIPIQYDNIEDVWRAFDALSRASIFLKRAKGGDWDLLSYAYDLMSSGVAAAEIEKKKPNWKPKWKKYQFPSYIQLLSKSKDIRDTRDEIIKKLAIHSSFNKTLNDTYPFFLIFYKKYDKRLSLNTKEKEYLNSASKS</sequence>
<evidence type="ECO:0000255" key="1">
    <source>
        <dbReference type="HAMAP-Rule" id="MF_01508"/>
    </source>
</evidence>